<dbReference type="EC" id="2.3.3.5" evidence="4 5 6"/>
<dbReference type="EC" id="2.3.3.16" evidence="6"/>
<dbReference type="EMBL" id="CR382131">
    <property type="protein sequence ID" value="CAG79048.1"/>
    <property type="molecule type" value="Genomic_DNA"/>
</dbReference>
<dbReference type="RefSeq" id="XP_503469.1">
    <property type="nucleotide sequence ID" value="XM_503469.1"/>
</dbReference>
<dbReference type="SMR" id="Q6C793"/>
<dbReference type="FunCoup" id="Q6C793">
    <property type="interactions" value="1028"/>
</dbReference>
<dbReference type="STRING" id="284591.Q6C793"/>
<dbReference type="EnsemblFungi" id="CAG79048">
    <property type="protein sequence ID" value="CAG79048"/>
    <property type="gene ID" value="YALI0_E02684g"/>
</dbReference>
<dbReference type="KEGG" id="yli:2912112"/>
<dbReference type="VEuPathDB" id="FungiDB:YALI0_E02684g"/>
<dbReference type="HOGENOM" id="CLU_022049_2_1_1"/>
<dbReference type="InParanoid" id="Q6C793"/>
<dbReference type="OMA" id="VLEWLFK"/>
<dbReference type="OrthoDB" id="105833at4891"/>
<dbReference type="UniPathway" id="UPA00946"/>
<dbReference type="Proteomes" id="UP000001300">
    <property type="component" value="Chromosome E"/>
</dbReference>
<dbReference type="GO" id="GO:0005759">
    <property type="term" value="C:mitochondrial matrix"/>
    <property type="evidence" value="ECO:0000318"/>
    <property type="project" value="GO_Central"/>
</dbReference>
<dbReference type="GO" id="GO:0050440">
    <property type="term" value="F:2-methylcitrate synthase activity"/>
    <property type="evidence" value="ECO:0007669"/>
    <property type="project" value="UniProtKB-EC"/>
</dbReference>
<dbReference type="GO" id="GO:0004108">
    <property type="term" value="F:citrate (Si)-synthase activity"/>
    <property type="evidence" value="ECO:0000318"/>
    <property type="project" value="GO_Central"/>
</dbReference>
<dbReference type="GO" id="GO:0005975">
    <property type="term" value="P:carbohydrate metabolic process"/>
    <property type="evidence" value="ECO:0000318"/>
    <property type="project" value="GO_Central"/>
</dbReference>
<dbReference type="GO" id="GO:0006101">
    <property type="term" value="P:citrate metabolic process"/>
    <property type="evidence" value="ECO:0007669"/>
    <property type="project" value="EnsemblFungi"/>
</dbReference>
<dbReference type="GO" id="GO:0006099">
    <property type="term" value="P:tricarboxylic acid cycle"/>
    <property type="evidence" value="ECO:0000318"/>
    <property type="project" value="GO_Central"/>
</dbReference>
<dbReference type="FunFam" id="1.10.230.10:FF:000001">
    <property type="entry name" value="Citrate synthase"/>
    <property type="match status" value="1"/>
</dbReference>
<dbReference type="FunFam" id="1.10.580.10:FF:000001">
    <property type="entry name" value="Citrate synthase"/>
    <property type="match status" value="1"/>
</dbReference>
<dbReference type="Gene3D" id="1.10.580.10">
    <property type="entry name" value="Citrate Synthase, domain 1"/>
    <property type="match status" value="1"/>
</dbReference>
<dbReference type="Gene3D" id="1.10.230.10">
    <property type="entry name" value="Cytochrome P450-Terp, domain 2"/>
    <property type="match status" value="1"/>
</dbReference>
<dbReference type="InterPro" id="IPR016142">
    <property type="entry name" value="Citrate_synth-like_lrg_a-sub"/>
</dbReference>
<dbReference type="InterPro" id="IPR016143">
    <property type="entry name" value="Citrate_synth-like_sm_a-sub"/>
</dbReference>
<dbReference type="InterPro" id="IPR002020">
    <property type="entry name" value="Citrate_synthase"/>
</dbReference>
<dbReference type="InterPro" id="IPR019810">
    <property type="entry name" value="Citrate_synthase_AS"/>
</dbReference>
<dbReference type="InterPro" id="IPR010109">
    <property type="entry name" value="Citrate_synthase_euk"/>
</dbReference>
<dbReference type="InterPro" id="IPR036969">
    <property type="entry name" value="Citrate_synthase_sf"/>
</dbReference>
<dbReference type="NCBIfam" id="TIGR01793">
    <property type="entry name" value="cit_synth_euk"/>
    <property type="match status" value="1"/>
</dbReference>
<dbReference type="NCBIfam" id="NF007128">
    <property type="entry name" value="PRK09569.1"/>
    <property type="match status" value="1"/>
</dbReference>
<dbReference type="PANTHER" id="PTHR11739">
    <property type="entry name" value="CITRATE SYNTHASE"/>
    <property type="match status" value="1"/>
</dbReference>
<dbReference type="PANTHER" id="PTHR11739:SF8">
    <property type="entry name" value="CITRATE SYNTHASE, MITOCHONDRIAL"/>
    <property type="match status" value="1"/>
</dbReference>
<dbReference type="Pfam" id="PF00285">
    <property type="entry name" value="Citrate_synt"/>
    <property type="match status" value="1"/>
</dbReference>
<dbReference type="PRINTS" id="PR00143">
    <property type="entry name" value="CITRTSNTHASE"/>
</dbReference>
<dbReference type="SUPFAM" id="SSF48256">
    <property type="entry name" value="Citrate synthase"/>
    <property type="match status" value="1"/>
</dbReference>
<dbReference type="PROSITE" id="PS00480">
    <property type="entry name" value="CITRATE_SYNTHASE"/>
    <property type="match status" value="1"/>
</dbReference>
<organism>
    <name type="scientific">Yarrowia lipolytica (strain CLIB 122 / E 150)</name>
    <name type="common">Yeast</name>
    <name type="synonym">Candida lipolytica</name>
    <dbReference type="NCBI Taxonomy" id="284591"/>
    <lineage>
        <taxon>Eukaryota</taxon>
        <taxon>Fungi</taxon>
        <taxon>Dikarya</taxon>
        <taxon>Ascomycota</taxon>
        <taxon>Saccharomycotina</taxon>
        <taxon>Dipodascomycetes</taxon>
        <taxon>Dipodascales</taxon>
        <taxon>Dipodascales incertae sedis</taxon>
        <taxon>Yarrowia</taxon>
    </lineage>
</organism>
<evidence type="ECO:0000250" key="1">
    <source>
        <dbReference type="UniProtKB" id="B0YD89"/>
    </source>
</evidence>
<evidence type="ECO:0000250" key="2">
    <source>
        <dbReference type="UniProtKB" id="O34002"/>
    </source>
</evidence>
<evidence type="ECO:0000250" key="3">
    <source>
        <dbReference type="UniProtKB" id="Q9TEM3"/>
    </source>
</evidence>
<evidence type="ECO:0000269" key="4">
    <source>
    </source>
</evidence>
<evidence type="ECO:0000269" key="5">
    <source ref="2"/>
</evidence>
<evidence type="ECO:0000269" key="6">
    <source ref="3"/>
</evidence>
<evidence type="ECO:0000303" key="7">
    <source ref="3"/>
</evidence>
<evidence type="ECO:0000305" key="8"/>
<keyword id="KW-0496">Mitochondrion</keyword>
<keyword id="KW-1185">Reference proteome</keyword>
<keyword id="KW-0808">Transferase</keyword>
<comment type="function">
    <text evidence="4 5 6">Component of the methylcitrate cycle that catalyzes the synthesis of (2S,3S)-2-methylcitrate from propionyl-CoA and oxaloacetate. Plays an important role in detoxification of propionyl-CoA, an inhibitor of both primary and secondary metabolism. Also has citrate synthase activity using as substrates acetyl-CoA and oxaloacetate.</text>
</comment>
<comment type="catalytic activity">
    <reaction evidence="4 5 6">
        <text>propanoyl-CoA + oxaloacetate + H2O = (2S,3S)-2-methylcitrate + CoA + H(+)</text>
        <dbReference type="Rhea" id="RHEA:23780"/>
        <dbReference type="ChEBI" id="CHEBI:15377"/>
        <dbReference type="ChEBI" id="CHEBI:15378"/>
        <dbReference type="ChEBI" id="CHEBI:16452"/>
        <dbReference type="ChEBI" id="CHEBI:57287"/>
        <dbReference type="ChEBI" id="CHEBI:57392"/>
        <dbReference type="ChEBI" id="CHEBI:58853"/>
        <dbReference type="EC" id="2.3.3.5"/>
    </reaction>
</comment>
<comment type="catalytic activity">
    <reaction evidence="6">
        <text>oxaloacetate + acetyl-CoA + H2O = citrate + CoA + H(+)</text>
        <dbReference type="Rhea" id="RHEA:16845"/>
        <dbReference type="ChEBI" id="CHEBI:15377"/>
        <dbReference type="ChEBI" id="CHEBI:15378"/>
        <dbReference type="ChEBI" id="CHEBI:16452"/>
        <dbReference type="ChEBI" id="CHEBI:16947"/>
        <dbReference type="ChEBI" id="CHEBI:57287"/>
        <dbReference type="ChEBI" id="CHEBI:57288"/>
        <dbReference type="EC" id="2.3.3.16"/>
    </reaction>
</comment>
<comment type="activity regulation">
    <text evidence="6">Activity is inhibited by p-chloromercuribenzoate (pCMB), monoiodoacetamide, H(2)O(2), ATP, ADP, NADH, NADPH, Hg(2+) and Zn(2+).</text>
</comment>
<comment type="biophysicochemical properties">
    <kinetics>
        <KM evidence="6">2.9 uM for acetyl-CoA</KM>
        <KM evidence="6">22 uM for butyryl-CoA</KM>
        <KM evidence="6">25 uM for oxaloacetate</KM>
        <KM evidence="6">5.3 uM for propionyl-CoA</KM>
        <KM evidence="6">25 uM for valeryl-CoA</KM>
    </kinetics>
    <phDependence>
        <text evidence="6">Optimum pH is 8.0-8.5.</text>
    </phDependence>
    <temperatureDependence>
        <text evidence="6">Optimum temperature is 45 degrees Celsius.</text>
    </temperatureDependence>
</comment>
<comment type="pathway">
    <text evidence="8">Organic acid metabolism; propanoate degradation.</text>
</comment>
<comment type="subunit">
    <text evidence="1">Homodimer.</text>
</comment>
<comment type="subcellular location">
    <subcellularLocation>
        <location evidence="4">Mitochondrion matrix</location>
    </subcellularLocation>
</comment>
<comment type="similarity">
    <text evidence="8">Belongs to the citrate synthase family.</text>
</comment>
<feature type="chain" id="PRO_0000433357" description="2-methylcitrate synthase, mitochondrial">
    <location>
        <begin position="1"/>
        <end position="465"/>
    </location>
</feature>
<feature type="active site" evidence="2">
    <location>
        <position position="301"/>
    </location>
</feature>
<feature type="active site" evidence="2">
    <location>
        <position position="347"/>
    </location>
</feature>
<feature type="active site" evidence="2">
    <location>
        <position position="402"/>
    </location>
</feature>
<feature type="binding site" description="in chain B" evidence="1">
    <location>
        <position position="72"/>
    </location>
    <ligand>
        <name>CoA</name>
        <dbReference type="ChEBI" id="CHEBI:57287"/>
        <note>ligand shared between homodimeric partners</note>
    </ligand>
</feature>
<feature type="binding site" description="in chain A" evidence="1">
    <location>
        <position position="190"/>
    </location>
    <ligand>
        <name>CoA</name>
        <dbReference type="ChEBI" id="CHEBI:57287"/>
        <note>ligand shared between homodimeric partners</note>
    </ligand>
</feature>
<feature type="binding site" description="in chain A" evidence="1">
    <location>
        <position position="265"/>
    </location>
    <ligand>
        <name>oxaloacetate</name>
        <dbReference type="ChEBI" id="CHEBI:16452"/>
        <note>ligand shared between homodimeric partners</note>
    </ligand>
</feature>
<feature type="binding site" description="in chain B" evidence="1">
    <location>
        <position position="300"/>
    </location>
    <ligand>
        <name>CoA</name>
        <dbReference type="ChEBI" id="CHEBI:57287"/>
        <note>ligand shared between homodimeric partners</note>
    </ligand>
</feature>
<feature type="binding site" description="in chain B" evidence="1">
    <location>
        <position position="342"/>
    </location>
    <ligand>
        <name>CoA</name>
        <dbReference type="ChEBI" id="CHEBI:57287"/>
        <note>ligand shared between homodimeric partners</note>
    </ligand>
</feature>
<feature type="binding site" description="in chain B" evidence="1">
    <location>
        <position position="344"/>
    </location>
    <ligand>
        <name>CoA</name>
        <dbReference type="ChEBI" id="CHEBI:57287"/>
        <note>ligand shared between homodimeric partners</note>
    </ligand>
</feature>
<feature type="binding site" description="in chain B" evidence="1">
    <location>
        <position position="345"/>
    </location>
    <ligand>
        <name>CoA</name>
        <dbReference type="ChEBI" id="CHEBI:57287"/>
        <note>ligand shared between homodimeric partners</note>
    </ligand>
</feature>
<feature type="binding site" description="in chain A" evidence="1">
    <location>
        <position position="347"/>
    </location>
    <ligand>
        <name>oxaloacetate</name>
        <dbReference type="ChEBI" id="CHEBI:16452"/>
        <note>ligand shared between homodimeric partners</note>
    </ligand>
</feature>
<feature type="binding site" description="in chain A" evidence="1">
    <location>
        <position position="356"/>
    </location>
    <ligand>
        <name>oxaloacetate</name>
        <dbReference type="ChEBI" id="CHEBI:16452"/>
        <note>ligand shared between homodimeric partners</note>
    </ligand>
</feature>
<feature type="binding site" description="in chain B" evidence="1">
    <location>
        <position position="394"/>
    </location>
    <ligand>
        <name>CoA</name>
        <dbReference type="ChEBI" id="CHEBI:57287"/>
        <note>ligand shared between homodimeric partners</note>
    </ligand>
</feature>
<feature type="binding site" description="in chain B" evidence="1">
    <location>
        <position position="395"/>
    </location>
    <ligand>
        <name>CoA</name>
        <dbReference type="ChEBI" id="CHEBI:57287"/>
        <note>ligand shared between homodimeric partners</note>
    </ligand>
</feature>
<feature type="binding site" description="in chain B" evidence="1">
    <location>
        <position position="400"/>
    </location>
    <ligand>
        <name>CoA</name>
        <dbReference type="ChEBI" id="CHEBI:57287"/>
        <note>ligand shared between homodimeric partners</note>
    </ligand>
</feature>
<feature type="binding site" description="in chain A" evidence="1">
    <location>
        <position position="428"/>
    </location>
    <ligand>
        <name>oxaloacetate</name>
        <dbReference type="ChEBI" id="CHEBI:16452"/>
        <note>ligand shared between homodimeric partners</note>
    </ligand>
</feature>
<feature type="binding site" description="in chain B" evidence="1">
    <location>
        <position position="448"/>
    </location>
    <ligand>
        <name>oxaloacetate</name>
        <dbReference type="ChEBI" id="CHEBI:16452"/>
        <note>ligand shared between homodimeric partners</note>
    </ligand>
</feature>
<reference key="1">
    <citation type="journal article" date="2004" name="Nature">
        <title>Genome evolution in yeasts.</title>
        <authorList>
            <person name="Dujon B."/>
            <person name="Sherman D."/>
            <person name="Fischer G."/>
            <person name="Durrens P."/>
            <person name="Casaregola S."/>
            <person name="Lafontaine I."/>
            <person name="de Montigny J."/>
            <person name="Marck C."/>
            <person name="Neuveglise C."/>
            <person name="Talla E."/>
            <person name="Goffard N."/>
            <person name="Frangeul L."/>
            <person name="Aigle M."/>
            <person name="Anthouard V."/>
            <person name="Babour A."/>
            <person name="Barbe V."/>
            <person name="Barnay S."/>
            <person name="Blanchin S."/>
            <person name="Beckerich J.-M."/>
            <person name="Beyne E."/>
            <person name="Bleykasten C."/>
            <person name="Boisrame A."/>
            <person name="Boyer J."/>
            <person name="Cattolico L."/>
            <person name="Confanioleri F."/>
            <person name="de Daruvar A."/>
            <person name="Despons L."/>
            <person name="Fabre E."/>
            <person name="Fairhead C."/>
            <person name="Ferry-Dumazet H."/>
            <person name="Groppi A."/>
            <person name="Hantraye F."/>
            <person name="Hennequin C."/>
            <person name="Jauniaux N."/>
            <person name="Joyet P."/>
            <person name="Kachouri R."/>
            <person name="Kerrest A."/>
            <person name="Koszul R."/>
            <person name="Lemaire M."/>
            <person name="Lesur I."/>
            <person name="Ma L."/>
            <person name="Muller H."/>
            <person name="Nicaud J.-M."/>
            <person name="Nikolski M."/>
            <person name="Oztas S."/>
            <person name="Ozier-Kalogeropoulos O."/>
            <person name="Pellenz S."/>
            <person name="Potier S."/>
            <person name="Richard G.-F."/>
            <person name="Straub M.-L."/>
            <person name="Suleau A."/>
            <person name="Swennen D."/>
            <person name="Tekaia F."/>
            <person name="Wesolowski-Louvel M."/>
            <person name="Westhof E."/>
            <person name="Wirth B."/>
            <person name="Zeniou-Meyer M."/>
            <person name="Zivanovic Y."/>
            <person name="Bolotin-Fukuhara M."/>
            <person name="Thierry A."/>
            <person name="Bouchier C."/>
            <person name="Caudron B."/>
            <person name="Scarpelli C."/>
            <person name="Gaillardin C."/>
            <person name="Weissenbach J."/>
            <person name="Wincker P."/>
            <person name="Souciet J.-L."/>
        </authorList>
    </citation>
    <scope>NUCLEOTIDE SEQUENCE [LARGE SCALE GENOMIC DNA]</scope>
    <source>
        <strain>CLIB 122 / E 150</strain>
    </source>
</reference>
<reference key="2">
    <citation type="journal article" date="1975" name="Agric. Biol. Chem.">
        <title>Methylcitrate condensing and methylisocitrate cleaving enzymes; evidence for the pathway of oxidation of propionyl-CoA to pyruvate via C7-tricarboxylic acids.</title>
        <authorList>
            <person name="Tabuchi T."/>
            <person name="Uchiyama H."/>
        </authorList>
    </citation>
    <scope>FUNCTION</scope>
    <scope>CATALYTIC ACTIVITY</scope>
</reference>
<reference key="3">
    <citation type="journal article" date="1976" name="Agric. Biol. Chem.">
        <title>Properties of methylcitrate synthase from Candida lipolytica.</title>
        <authorList>
            <person name="Uchiyama H."/>
            <person name="Tabuchi T."/>
        </authorList>
    </citation>
    <scope>FUNCTION</scope>
    <scope>CATALYTIC ACTIVITY</scope>
    <scope>BIOPHYSICOCHEMICAL PROPERTIES</scope>
    <scope>ACTIVITY REGULATION</scope>
</reference>
<reference key="4">
    <citation type="journal article" date="1982" name="Eur. J. Biochem.">
        <title>Subcellular localization of the methylcitric-acid-cycle enzymes in propionate metabolism of Yarrowia lipolytica.</title>
        <authorList>
            <person name="Uchiyama H."/>
            <person name="Ando M."/>
            <person name="Toyonaka Y."/>
            <person name="Tabuchi T."/>
        </authorList>
    </citation>
    <scope>SUBCELLULAR LOCATION</scope>
    <scope>FUNCTION</scope>
    <scope>CATALYTIC ACTIVITY</scope>
</reference>
<gene>
    <name type="ordered locus">YALI0E02684g</name>
</gene>
<sequence length="465" mass="51709">MISAIRPAVRSSVRVAPMANTAFRAYSTQDGLKERFAELIPENVEKIKKLRKEKGNTVIGEVILDQAYGGMRGIKGLVWEGSVLDPEEGIRFRGLTIPDLQKQLPHAPGGKEPLPEGLFWLLLTGEIPTDAQVKGLSADWASRAEIPKHVEELIDRCPPTLHPMAQLGIAVNALESESQFTKAYEKGVNKKEYWQYTYEDSMNLIAKLPVIASRIYRNLFKDGKIVGSIDNSLDYSANFASLLGFGDNKEFIELLRLYLTIHADHEGGNVSAHTTKLVGSALSSPFLSLSAGLNGLAGPLHGRANQEVLEWILEMKSKIGSDVTKEDIEKYLWDTLKAGRVVPGYGHAVLRKTDPRYTAQREFALEHMPDYDLFHLVSTIYEVAPKVLTEHGKTKNPWPNVDSHSGVLLQYYGLTEQSYYTVLFGVSRAIGVLPQLIMDRAYGAPIERPKSFSTEKYAELVGLKL</sequence>
<accession>Q6C793</accession>
<name>PRPC_YARLI</name>
<protein>
    <recommendedName>
        <fullName evidence="8">2-methylcitrate synthase, mitochondrial</fullName>
        <shortName evidence="7">Methylcitrate synthase</shortName>
        <ecNumber evidence="4 5 6">2.3.3.5</ecNumber>
    </recommendedName>
    <alternativeName>
        <fullName evidence="3">(2S,3S)-2-methylcitrate synthase</fullName>
    </alternativeName>
    <alternativeName>
        <fullName evidence="8">Citrate synthase 2</fullName>
        <ecNumber evidence="6">2.3.3.16</ecNumber>
    </alternativeName>
</protein>
<proteinExistence type="evidence at protein level"/>